<accession>B4EZH2</accession>
<gene>
    <name evidence="1" type="primary">smrB</name>
    <name type="ordered locus">PMI1805</name>
</gene>
<name>SMRB_PROMH</name>
<dbReference type="EC" id="3.1.-.-" evidence="1"/>
<dbReference type="EMBL" id="AM942759">
    <property type="protein sequence ID" value="CAR43752.1"/>
    <property type="molecule type" value="Genomic_DNA"/>
</dbReference>
<dbReference type="RefSeq" id="WP_004243759.1">
    <property type="nucleotide sequence ID" value="NC_010554.1"/>
</dbReference>
<dbReference type="SMR" id="B4EZH2"/>
<dbReference type="EnsemblBacteria" id="CAR43752">
    <property type="protein sequence ID" value="CAR43752"/>
    <property type="gene ID" value="PMI1805"/>
</dbReference>
<dbReference type="GeneID" id="6801703"/>
<dbReference type="KEGG" id="pmr:PMI1805"/>
<dbReference type="eggNOG" id="COG2840">
    <property type="taxonomic scope" value="Bacteria"/>
</dbReference>
<dbReference type="HOGENOM" id="CLU_055978_4_0_6"/>
<dbReference type="Proteomes" id="UP000008319">
    <property type="component" value="Chromosome"/>
</dbReference>
<dbReference type="GO" id="GO:0004521">
    <property type="term" value="F:RNA endonuclease activity"/>
    <property type="evidence" value="ECO:0007669"/>
    <property type="project" value="UniProtKB-UniRule"/>
</dbReference>
<dbReference type="GO" id="GO:0019843">
    <property type="term" value="F:rRNA binding"/>
    <property type="evidence" value="ECO:0007669"/>
    <property type="project" value="UniProtKB-UniRule"/>
</dbReference>
<dbReference type="GO" id="GO:0072344">
    <property type="term" value="P:rescue of stalled ribosome"/>
    <property type="evidence" value="ECO:0007669"/>
    <property type="project" value="UniProtKB-UniRule"/>
</dbReference>
<dbReference type="Gene3D" id="3.30.1370.110">
    <property type="match status" value="1"/>
</dbReference>
<dbReference type="HAMAP" id="MF_01042">
    <property type="entry name" value="SmrB"/>
    <property type="match status" value="1"/>
</dbReference>
<dbReference type="InterPro" id="IPR002625">
    <property type="entry name" value="Smr_dom"/>
</dbReference>
<dbReference type="InterPro" id="IPR036063">
    <property type="entry name" value="Smr_dom_sf"/>
</dbReference>
<dbReference type="InterPro" id="IPR022990">
    <property type="entry name" value="SmrB-like"/>
</dbReference>
<dbReference type="NCBIfam" id="NF003432">
    <property type="entry name" value="PRK04946.1"/>
    <property type="match status" value="1"/>
</dbReference>
<dbReference type="PANTHER" id="PTHR35562">
    <property type="entry name" value="DNA ENDONUCLEASE SMRA-RELATED"/>
    <property type="match status" value="1"/>
</dbReference>
<dbReference type="PANTHER" id="PTHR35562:SF1">
    <property type="entry name" value="UPF0115 PROTEIN YFCN"/>
    <property type="match status" value="1"/>
</dbReference>
<dbReference type="Pfam" id="PF01713">
    <property type="entry name" value="Smr"/>
    <property type="match status" value="1"/>
</dbReference>
<dbReference type="SMART" id="SM00463">
    <property type="entry name" value="SMR"/>
    <property type="match status" value="1"/>
</dbReference>
<dbReference type="SUPFAM" id="SSF160443">
    <property type="entry name" value="SMR domain-like"/>
    <property type="match status" value="1"/>
</dbReference>
<dbReference type="PROSITE" id="PS50828">
    <property type="entry name" value="SMR"/>
    <property type="match status" value="1"/>
</dbReference>
<sequence>MNKKFILPPSEIELFQEMIKGTKKLPQDKIRHQTPRKKVTHYPTERLQQEQIDASYYFSDEFQPNLATEGPMRYLREGANAYELKKLRRGDYVPEFFLDLHGLTQLIAKQEIGALIAACRREHVYCACIMHGHGKHILKQQTPLWLAQHPDIIAFHQAPKEWGGDAALLLLVENDDIARR</sequence>
<proteinExistence type="inferred from homology"/>
<feature type="chain" id="PRO_1000136046" description="Ribosome rescue factor SmrB">
    <location>
        <begin position="1"/>
        <end position="180"/>
    </location>
</feature>
<feature type="domain" description="Smr" evidence="1">
    <location>
        <begin position="98"/>
        <end position="173"/>
    </location>
</feature>
<protein>
    <recommendedName>
        <fullName evidence="1">Ribosome rescue factor SmrB</fullName>
        <ecNumber evidence="1">3.1.-.-</ecNumber>
    </recommendedName>
</protein>
<organism>
    <name type="scientific">Proteus mirabilis (strain HI4320)</name>
    <dbReference type="NCBI Taxonomy" id="529507"/>
    <lineage>
        <taxon>Bacteria</taxon>
        <taxon>Pseudomonadati</taxon>
        <taxon>Pseudomonadota</taxon>
        <taxon>Gammaproteobacteria</taxon>
        <taxon>Enterobacterales</taxon>
        <taxon>Morganellaceae</taxon>
        <taxon>Proteus</taxon>
    </lineage>
</organism>
<comment type="function">
    <text evidence="1">Acts as a ribosome collision sensor. Detects stalled/collided disomes (pairs of ribosomes where the leading ribosome is stalled and a second ribosome has collided with it) and endonucleolytically cleaves mRNA at the 5' boundary of the stalled ribosome. Stalled/collided disomes form a new interface (primarily via the 30S subunits) that binds SmrB. Cleaved mRNA becomes available for tmRNA ligation, leading to ribosomal subunit dissociation and rescue of stalled ribosomes.</text>
</comment>
<comment type="subunit">
    <text evidence="1">Associates with collided ribosomes, but not with correctly translating polysomes.</text>
</comment>
<comment type="similarity">
    <text evidence="1">Belongs to the SmrB family.</text>
</comment>
<evidence type="ECO:0000255" key="1">
    <source>
        <dbReference type="HAMAP-Rule" id="MF_01042"/>
    </source>
</evidence>
<reference key="1">
    <citation type="journal article" date="2008" name="J. Bacteriol.">
        <title>Complete genome sequence of uropathogenic Proteus mirabilis, a master of both adherence and motility.</title>
        <authorList>
            <person name="Pearson M.M."/>
            <person name="Sebaihia M."/>
            <person name="Churcher C."/>
            <person name="Quail M.A."/>
            <person name="Seshasayee A.S."/>
            <person name="Luscombe N.M."/>
            <person name="Abdellah Z."/>
            <person name="Arrosmith C."/>
            <person name="Atkin B."/>
            <person name="Chillingworth T."/>
            <person name="Hauser H."/>
            <person name="Jagels K."/>
            <person name="Moule S."/>
            <person name="Mungall K."/>
            <person name="Norbertczak H."/>
            <person name="Rabbinowitsch E."/>
            <person name="Walker D."/>
            <person name="Whithead S."/>
            <person name="Thomson N.R."/>
            <person name="Rather P.N."/>
            <person name="Parkhill J."/>
            <person name="Mobley H.L.T."/>
        </authorList>
    </citation>
    <scope>NUCLEOTIDE SEQUENCE [LARGE SCALE GENOMIC DNA]</scope>
    <source>
        <strain>HI4320</strain>
    </source>
</reference>
<keyword id="KW-0255">Endonuclease</keyword>
<keyword id="KW-0378">Hydrolase</keyword>
<keyword id="KW-0540">Nuclease</keyword>
<keyword id="KW-1185">Reference proteome</keyword>
<keyword id="KW-0694">RNA-binding</keyword>
<keyword id="KW-0699">rRNA-binding</keyword>